<keyword id="KW-0131">Cell cycle</keyword>
<keyword id="KW-0132">Cell division</keyword>
<keyword id="KW-0997">Cell inner membrane</keyword>
<keyword id="KW-1003">Cell membrane</keyword>
<keyword id="KW-0175">Coiled coil</keyword>
<keyword id="KW-0472">Membrane</keyword>
<keyword id="KW-0812">Transmembrane</keyword>
<keyword id="KW-1133">Transmembrane helix</keyword>
<feature type="chain" id="PRO_1000129937" description="Cell division protein FtsB">
    <location>
        <begin position="1"/>
        <end position="103"/>
    </location>
</feature>
<feature type="topological domain" description="Cytoplasmic" evidence="1">
    <location>
        <begin position="1"/>
        <end position="3"/>
    </location>
</feature>
<feature type="transmembrane region" description="Helical" evidence="1">
    <location>
        <begin position="4"/>
        <end position="21"/>
    </location>
</feature>
<feature type="topological domain" description="Periplasmic" evidence="1">
    <location>
        <begin position="22"/>
        <end position="103"/>
    </location>
</feature>
<feature type="coiled-coil region" evidence="1">
    <location>
        <begin position="33"/>
        <end position="62"/>
    </location>
</feature>
<dbReference type="EMBL" id="CP001138">
    <property type="protein sequence ID" value="ACH52133.1"/>
    <property type="molecule type" value="Genomic_DNA"/>
</dbReference>
<dbReference type="RefSeq" id="WP_000517480.1">
    <property type="nucleotide sequence ID" value="NC_011149.1"/>
</dbReference>
<dbReference type="SMR" id="B5F412"/>
<dbReference type="KEGG" id="sea:SeAg_B3056"/>
<dbReference type="HOGENOM" id="CLU_134863_5_2_6"/>
<dbReference type="Proteomes" id="UP000008819">
    <property type="component" value="Chromosome"/>
</dbReference>
<dbReference type="GO" id="GO:0032153">
    <property type="term" value="C:cell division site"/>
    <property type="evidence" value="ECO:0007669"/>
    <property type="project" value="UniProtKB-UniRule"/>
</dbReference>
<dbReference type="GO" id="GO:0030428">
    <property type="term" value="C:cell septum"/>
    <property type="evidence" value="ECO:0007669"/>
    <property type="project" value="TreeGrafter"/>
</dbReference>
<dbReference type="GO" id="GO:0005886">
    <property type="term" value="C:plasma membrane"/>
    <property type="evidence" value="ECO:0007669"/>
    <property type="project" value="UniProtKB-SubCell"/>
</dbReference>
<dbReference type="GO" id="GO:0043093">
    <property type="term" value="P:FtsZ-dependent cytokinesis"/>
    <property type="evidence" value="ECO:0007669"/>
    <property type="project" value="UniProtKB-UniRule"/>
</dbReference>
<dbReference type="FunFam" id="1.20.5.400:FF:000001">
    <property type="entry name" value="Cell division protein FtsB"/>
    <property type="match status" value="1"/>
</dbReference>
<dbReference type="Gene3D" id="1.20.5.400">
    <property type="match status" value="1"/>
</dbReference>
<dbReference type="HAMAP" id="MF_00599">
    <property type="entry name" value="FtsB"/>
    <property type="match status" value="1"/>
</dbReference>
<dbReference type="InterPro" id="IPR023081">
    <property type="entry name" value="Cell_div_FtsB"/>
</dbReference>
<dbReference type="InterPro" id="IPR007060">
    <property type="entry name" value="FtsL/DivIC"/>
</dbReference>
<dbReference type="NCBIfam" id="NF002058">
    <property type="entry name" value="PRK00888.1"/>
    <property type="match status" value="1"/>
</dbReference>
<dbReference type="PANTHER" id="PTHR37485">
    <property type="entry name" value="CELL DIVISION PROTEIN FTSB"/>
    <property type="match status" value="1"/>
</dbReference>
<dbReference type="PANTHER" id="PTHR37485:SF1">
    <property type="entry name" value="CELL DIVISION PROTEIN FTSB"/>
    <property type="match status" value="1"/>
</dbReference>
<dbReference type="Pfam" id="PF04977">
    <property type="entry name" value="DivIC"/>
    <property type="match status" value="1"/>
</dbReference>
<gene>
    <name evidence="1" type="primary">ftsB</name>
    <name type="ordered locus">SeAg_B3056</name>
</gene>
<proteinExistence type="inferred from homology"/>
<evidence type="ECO:0000255" key="1">
    <source>
        <dbReference type="HAMAP-Rule" id="MF_00599"/>
    </source>
</evidence>
<organism>
    <name type="scientific">Salmonella agona (strain SL483)</name>
    <dbReference type="NCBI Taxonomy" id="454166"/>
    <lineage>
        <taxon>Bacteria</taxon>
        <taxon>Pseudomonadati</taxon>
        <taxon>Pseudomonadota</taxon>
        <taxon>Gammaproteobacteria</taxon>
        <taxon>Enterobacterales</taxon>
        <taxon>Enterobacteriaceae</taxon>
        <taxon>Salmonella</taxon>
    </lineage>
</organism>
<accession>B5F412</accession>
<sequence>MGKLTLLLLALLVWLQYSLWFGKNGIHDYSRVNDDVVAQQATNAKLKARNDQLFAEIDDLNGGQEAIEERARNELSMTKPGETFYRLVPDASKRAATAGQTHR</sequence>
<name>FTSB_SALA4</name>
<protein>
    <recommendedName>
        <fullName evidence="1">Cell division protein FtsB</fullName>
    </recommendedName>
</protein>
<comment type="function">
    <text evidence="1">Essential cell division protein. May link together the upstream cell division proteins, which are predominantly cytoplasmic, with the downstream cell division proteins, which are predominantly periplasmic.</text>
</comment>
<comment type="subunit">
    <text evidence="1">Part of a complex composed of FtsB, FtsL and FtsQ.</text>
</comment>
<comment type="subcellular location">
    <subcellularLocation>
        <location evidence="1">Cell inner membrane</location>
        <topology evidence="1">Single-pass type II membrane protein</topology>
    </subcellularLocation>
    <text evidence="1">Localizes to the division septum.</text>
</comment>
<comment type="similarity">
    <text evidence="1">Belongs to the FtsB family.</text>
</comment>
<reference key="1">
    <citation type="journal article" date="2011" name="J. Bacteriol.">
        <title>Comparative genomics of 28 Salmonella enterica isolates: evidence for CRISPR-mediated adaptive sublineage evolution.</title>
        <authorList>
            <person name="Fricke W.F."/>
            <person name="Mammel M.K."/>
            <person name="McDermott P.F."/>
            <person name="Tartera C."/>
            <person name="White D.G."/>
            <person name="Leclerc J.E."/>
            <person name="Ravel J."/>
            <person name="Cebula T.A."/>
        </authorList>
    </citation>
    <scope>NUCLEOTIDE SEQUENCE [LARGE SCALE GENOMIC DNA]</scope>
    <source>
        <strain>SL483</strain>
    </source>
</reference>